<organism>
    <name type="scientific">Pan troglodytes</name>
    <name type="common">Chimpanzee</name>
    <dbReference type="NCBI Taxonomy" id="9598"/>
    <lineage>
        <taxon>Eukaryota</taxon>
        <taxon>Metazoa</taxon>
        <taxon>Chordata</taxon>
        <taxon>Craniata</taxon>
        <taxon>Vertebrata</taxon>
        <taxon>Euteleostomi</taxon>
        <taxon>Mammalia</taxon>
        <taxon>Eutheria</taxon>
        <taxon>Euarchontoglires</taxon>
        <taxon>Primates</taxon>
        <taxon>Haplorrhini</taxon>
        <taxon>Catarrhini</taxon>
        <taxon>Hominidae</taxon>
        <taxon>Pan</taxon>
    </lineage>
</organism>
<sequence>MGGSCAQRRRAGPRQVLFPLLLPFFYPTLCEPIRYSIPEELAKGSVVGNLAKDLGLSVLDVSARKLRVSAEKLHFSVDAESGDLLVKNRIDREQICKERRRCELQLEAVVENPLNIFHVIVVIEDVNDHAPQFDKKEIHLEIFESASAGTRLSLDPATDPDININSIKDYKINSNPYFSLMVRVNSDGGKYPELSLEKLLDREEQRSHSLILTALDGGDPPRSATAHIEISVKDTNDNPPVFSRDEYRISLSENLPPGSPVLQVTATDQDEGVNAEINYYFRSTAQSTKHMFSLDEKTGMIKNNQSFDFEDVERYTMEVEAKDGGGLSTQCKVIIEILDENDNSPEIIITSLSDQILENSPPGMVVALFKTRDLDFGGNGEVRCNIETDIPFKIYSSSNHYYKLVTDGALDREQTPEYNVTIVATDRGKPPLSSSRSITLYVADINDNAPVFDQTSYVVHVAENNPPGASIAQVSASDPDLGLNGHISYSIVASDLEPLAVSSYVSVSAQSGVVFAQRAFDHEQLRAFALTLQARDHGSPTLSANVSLRVLVGDRNDNAPRVLYPALGPDGSAFFDMVPRSAEPGYLVTKVVAVDADSGHNAWLSYHVLQASEPGLFSLGLRTGEVRTARALGDRDAARQRLLVAVRDGGQPPLSATATLHLVFADNLQEILPDLSDRPVLSDPQAELQFYLVVALALISVLFLLAVILAIALRLRRSLSPTTWDCFHPGLCVKSGPVVPPNYSEGTLPYSYNLCIAHTGTKEFNFLKCSVPLHSNEDMVCSVSPGALIPPHGGEDLTSHPETLTSQAPPNTDWRFSQAQRPGTSGSQNGDDTGTWPNNQFDTEMLQAMILASASEAADGSSTLGGGAGTMGLSARYGPQFTLQHVPDYRQNVYIPGSNATLTNAAGKRDGKAPAGGNGNKKKSGKKEKK</sequence>
<comment type="function">
    <text>Potential calcium-dependent cell-adhesion protein. May be involved in the establishment and maintenance of specific neuronal connections in the brain.</text>
</comment>
<comment type="subcellular location">
    <subcellularLocation>
        <location evidence="1">Cell membrane</location>
        <topology evidence="1">Single-pass type I membrane protein</topology>
    </subcellularLocation>
</comment>
<dbReference type="RefSeq" id="NP_001076035.1">
    <property type="nucleotide sequence ID" value="NM_001082566.4"/>
</dbReference>
<dbReference type="SMR" id="Q5DRA6"/>
<dbReference type="FunCoup" id="Q5DRA6">
    <property type="interactions" value="2"/>
</dbReference>
<dbReference type="GlyCosmos" id="Q5DRA6">
    <property type="glycosylation" value="3 sites, No reported glycans"/>
</dbReference>
<dbReference type="Ensembl" id="ENSPTRT00000061820.4">
    <property type="protein sequence ID" value="ENSPTRP00000054362.4"/>
    <property type="gene ID" value="ENSPTRG00000017346.7"/>
</dbReference>
<dbReference type="GeneID" id="100034690"/>
<dbReference type="KEGG" id="ptr:100034690"/>
<dbReference type="CTD" id="56100"/>
<dbReference type="GeneTree" id="ENSGT00940000162232"/>
<dbReference type="InParanoid" id="Q5DRA6"/>
<dbReference type="OrthoDB" id="11117at9604"/>
<dbReference type="Proteomes" id="UP000002277">
    <property type="component" value="Chromosome 5"/>
</dbReference>
<dbReference type="Bgee" id="ENSPTRG00000017346">
    <property type="expression patterns" value="Expressed in dorsolateral prefrontal cortex and 21 other cell types or tissues"/>
</dbReference>
<dbReference type="GO" id="GO:0005886">
    <property type="term" value="C:plasma membrane"/>
    <property type="evidence" value="ECO:0007669"/>
    <property type="project" value="UniProtKB-SubCell"/>
</dbReference>
<dbReference type="GO" id="GO:0005509">
    <property type="term" value="F:calcium ion binding"/>
    <property type="evidence" value="ECO:0007669"/>
    <property type="project" value="InterPro"/>
</dbReference>
<dbReference type="GO" id="GO:0007156">
    <property type="term" value="P:homophilic cell adhesion via plasma membrane adhesion molecules"/>
    <property type="evidence" value="ECO:0007669"/>
    <property type="project" value="InterPro"/>
</dbReference>
<dbReference type="GO" id="GO:0007399">
    <property type="term" value="P:nervous system development"/>
    <property type="evidence" value="ECO:0007669"/>
    <property type="project" value="UniProtKB-ARBA"/>
</dbReference>
<dbReference type="CDD" id="cd11304">
    <property type="entry name" value="Cadherin_repeat"/>
    <property type="match status" value="6"/>
</dbReference>
<dbReference type="FunFam" id="2.60.40.60:FF:000004">
    <property type="entry name" value="Protocadherin 1 gamma 2"/>
    <property type="match status" value="1"/>
</dbReference>
<dbReference type="FunFam" id="2.60.40.60:FF:000001">
    <property type="entry name" value="Protocadherin alpha 2"/>
    <property type="match status" value="1"/>
</dbReference>
<dbReference type="FunFam" id="2.60.40.60:FF:000002">
    <property type="entry name" value="Protocadherin alpha 2"/>
    <property type="match status" value="1"/>
</dbReference>
<dbReference type="FunFam" id="2.60.40.60:FF:000006">
    <property type="entry name" value="Protocadherin alpha 2"/>
    <property type="match status" value="1"/>
</dbReference>
<dbReference type="FunFam" id="2.60.40.60:FF:000129">
    <property type="entry name" value="protocadherin alpha-C2 isoform X1"/>
    <property type="match status" value="1"/>
</dbReference>
<dbReference type="FunFam" id="2.60.40.60:FF:000018">
    <property type="entry name" value="Protocadherin gamma c3"/>
    <property type="match status" value="1"/>
</dbReference>
<dbReference type="Gene3D" id="2.60.40.60">
    <property type="entry name" value="Cadherins"/>
    <property type="match status" value="6"/>
</dbReference>
<dbReference type="InterPro" id="IPR002126">
    <property type="entry name" value="Cadherin-like_dom"/>
</dbReference>
<dbReference type="InterPro" id="IPR015919">
    <property type="entry name" value="Cadherin-like_sf"/>
</dbReference>
<dbReference type="InterPro" id="IPR032455">
    <property type="entry name" value="Cadherin_C"/>
</dbReference>
<dbReference type="InterPro" id="IPR031904">
    <property type="entry name" value="Cadherin_CBD"/>
</dbReference>
<dbReference type="InterPro" id="IPR020894">
    <property type="entry name" value="Cadherin_CS"/>
</dbReference>
<dbReference type="InterPro" id="IPR013164">
    <property type="entry name" value="Cadherin_N"/>
</dbReference>
<dbReference type="InterPro" id="IPR050174">
    <property type="entry name" value="Protocadherin/Cadherin-CA"/>
</dbReference>
<dbReference type="PANTHER" id="PTHR24028">
    <property type="entry name" value="CADHERIN-87A"/>
    <property type="match status" value="1"/>
</dbReference>
<dbReference type="PANTHER" id="PTHR24028:SF66">
    <property type="entry name" value="PROTOCADHERIN GAMMA-B6"/>
    <property type="match status" value="1"/>
</dbReference>
<dbReference type="Pfam" id="PF00028">
    <property type="entry name" value="Cadherin"/>
    <property type="match status" value="5"/>
</dbReference>
<dbReference type="Pfam" id="PF08266">
    <property type="entry name" value="Cadherin_2"/>
    <property type="match status" value="1"/>
</dbReference>
<dbReference type="Pfam" id="PF16492">
    <property type="entry name" value="Cadherin_C_2"/>
    <property type="match status" value="1"/>
</dbReference>
<dbReference type="Pfam" id="PF15974">
    <property type="entry name" value="Cadherin_tail"/>
    <property type="match status" value="1"/>
</dbReference>
<dbReference type="PRINTS" id="PR00205">
    <property type="entry name" value="CADHERIN"/>
</dbReference>
<dbReference type="SMART" id="SM00112">
    <property type="entry name" value="CA"/>
    <property type="match status" value="6"/>
</dbReference>
<dbReference type="SUPFAM" id="SSF49313">
    <property type="entry name" value="Cadherin-like"/>
    <property type="match status" value="6"/>
</dbReference>
<dbReference type="PROSITE" id="PS00232">
    <property type="entry name" value="CADHERIN_1"/>
    <property type="match status" value="5"/>
</dbReference>
<dbReference type="PROSITE" id="PS50268">
    <property type="entry name" value="CADHERIN_2"/>
    <property type="match status" value="6"/>
</dbReference>
<protein>
    <recommendedName>
        <fullName>Protocadherin gamma-B6</fullName>
        <shortName>PCDH-gamma-B6</shortName>
    </recommendedName>
</protein>
<name>PCDGI_PANTR</name>
<feature type="signal peptide" evidence="2">
    <location>
        <begin position="1"/>
        <end position="30"/>
    </location>
</feature>
<feature type="chain" id="PRO_0000003982" description="Protocadherin gamma-B6">
    <location>
        <begin position="31"/>
        <end position="930"/>
    </location>
</feature>
<feature type="topological domain" description="Extracellular" evidence="2">
    <location>
        <begin position="31"/>
        <end position="691"/>
    </location>
</feature>
<feature type="transmembrane region" description="Helical" evidence="2">
    <location>
        <begin position="692"/>
        <end position="712"/>
    </location>
</feature>
<feature type="topological domain" description="Cytoplasmic" evidence="2">
    <location>
        <begin position="713"/>
        <end position="930"/>
    </location>
</feature>
<feature type="domain" description="Cadherin 1" evidence="3">
    <location>
        <begin position="31"/>
        <end position="133"/>
    </location>
</feature>
<feature type="domain" description="Cadherin 2" evidence="3">
    <location>
        <begin position="134"/>
        <end position="242"/>
    </location>
</feature>
<feature type="domain" description="Cadherin 3" evidence="3">
    <location>
        <begin position="243"/>
        <end position="347"/>
    </location>
</feature>
<feature type="domain" description="Cadherin 4" evidence="3">
    <location>
        <begin position="348"/>
        <end position="452"/>
    </location>
</feature>
<feature type="domain" description="Cadherin 5" evidence="3">
    <location>
        <begin position="453"/>
        <end position="562"/>
    </location>
</feature>
<feature type="domain" description="Cadherin 6" evidence="3">
    <location>
        <begin position="570"/>
        <end position="675"/>
    </location>
</feature>
<feature type="region of interest" description="Disordered" evidence="4">
    <location>
        <begin position="791"/>
        <end position="839"/>
    </location>
</feature>
<feature type="region of interest" description="Disordered" evidence="4">
    <location>
        <begin position="900"/>
        <end position="930"/>
    </location>
</feature>
<feature type="compositionally biased region" description="Polar residues" evidence="4">
    <location>
        <begin position="800"/>
        <end position="839"/>
    </location>
</feature>
<feature type="compositionally biased region" description="Basic residues" evidence="4">
    <location>
        <begin position="920"/>
        <end position="930"/>
    </location>
</feature>
<feature type="glycosylation site" description="N-linked (GlcNAc...) asparagine" evidence="2">
    <location>
        <position position="304"/>
    </location>
</feature>
<feature type="glycosylation site" description="N-linked (GlcNAc...) asparagine" evidence="2">
    <location>
        <position position="419"/>
    </location>
</feature>
<feature type="glycosylation site" description="N-linked (GlcNAc...) asparagine" evidence="2">
    <location>
        <position position="545"/>
    </location>
</feature>
<keyword id="KW-0106">Calcium</keyword>
<keyword id="KW-0130">Cell adhesion</keyword>
<keyword id="KW-1003">Cell membrane</keyword>
<keyword id="KW-0325">Glycoprotein</keyword>
<keyword id="KW-0472">Membrane</keyword>
<keyword id="KW-1185">Reference proteome</keyword>
<keyword id="KW-0677">Repeat</keyword>
<keyword id="KW-0732">Signal</keyword>
<keyword id="KW-0812">Transmembrane</keyword>
<keyword id="KW-1133">Transmembrane helix</keyword>
<gene>
    <name type="primary">PCDHGB6</name>
</gene>
<reference key="1">
    <citation type="journal article" date="2005" name="Nature">
        <title>Initial sequence of the chimpanzee genome and comparison with the human genome.</title>
        <authorList>
            <consortium name="Chimpanzee sequencing and analysis consortium"/>
        </authorList>
    </citation>
    <scope>NUCLEOTIDE SEQUENCE [LARGE SCALE GENOMIC DNA]</scope>
</reference>
<reference key="2">
    <citation type="journal article" date="2005" name="Genetics">
        <title>Comparative genomics and diversifying selection of the clustered vertebrate protocadherin genes.</title>
        <authorList>
            <person name="Wu Q."/>
        </authorList>
    </citation>
    <scope>IDENTIFICATION</scope>
</reference>
<proteinExistence type="inferred from homology"/>
<evidence type="ECO:0000250" key="1"/>
<evidence type="ECO:0000255" key="2"/>
<evidence type="ECO:0000255" key="3">
    <source>
        <dbReference type="PROSITE-ProRule" id="PRU00043"/>
    </source>
</evidence>
<evidence type="ECO:0000256" key="4">
    <source>
        <dbReference type="SAM" id="MobiDB-lite"/>
    </source>
</evidence>
<accession>Q5DRA6</accession>